<feature type="chain" id="PRO_1000099253" description="Diaminopimelate epimerase">
    <location>
        <begin position="1"/>
        <end position="290"/>
    </location>
</feature>
<feature type="active site" description="Proton donor" evidence="1">
    <location>
        <position position="78"/>
    </location>
</feature>
<feature type="active site" description="Proton acceptor" evidence="1">
    <location>
        <position position="226"/>
    </location>
</feature>
<feature type="binding site" evidence="1">
    <location>
        <position position="17"/>
    </location>
    <ligand>
        <name>substrate</name>
    </ligand>
</feature>
<feature type="binding site" evidence="1">
    <location>
        <position position="49"/>
    </location>
    <ligand>
        <name>substrate</name>
    </ligand>
</feature>
<feature type="binding site" evidence="1">
    <location>
        <position position="69"/>
    </location>
    <ligand>
        <name>substrate</name>
    </ligand>
</feature>
<feature type="binding site" evidence="1">
    <location>
        <begin position="79"/>
        <end position="80"/>
    </location>
    <ligand>
        <name>substrate</name>
    </ligand>
</feature>
<feature type="binding site" evidence="1">
    <location>
        <position position="166"/>
    </location>
    <ligand>
        <name>substrate</name>
    </ligand>
</feature>
<feature type="binding site" evidence="1">
    <location>
        <position position="199"/>
    </location>
    <ligand>
        <name>substrate</name>
    </ligand>
</feature>
<feature type="binding site" evidence="1">
    <location>
        <begin position="217"/>
        <end position="218"/>
    </location>
    <ligand>
        <name>substrate</name>
    </ligand>
</feature>
<feature type="binding site" evidence="1">
    <location>
        <begin position="227"/>
        <end position="228"/>
    </location>
    <ligand>
        <name>substrate</name>
    </ligand>
</feature>
<feature type="site" description="Could be important to modulate the pK values of the two catalytic cysteine residues" evidence="1">
    <location>
        <position position="168"/>
    </location>
</feature>
<feature type="site" description="Could be important to modulate the pK values of the two catalytic cysteine residues" evidence="1">
    <location>
        <position position="217"/>
    </location>
</feature>
<sequence length="290" mass="31496">MTVLANHSFAKMNGIGNEIVIVDLRNTDSQLSAAEARAIAAPGGVPYDQLMVLQKPRMPGTTAFVRIYNNDGSEAGACGNGMRCVAKRVFGESGAQAATFETRAGLLNCWQGPSPDLYTVDMGTPKFGWQDIPLAEEFRDTRYIELQIGPIDAPVLHSPSVVSMGNPHAIFWVDDIEAYDLERLGPLLENHPIFPERANITLAHVVDRNHIRMRTWERGAGLTLACGSAACATAVAAARLKRTDRTVEMSLPGGDLTIEWRESDDHVLMTGAAVLEYEGLFDPDLFAALA</sequence>
<gene>
    <name evidence="1" type="primary">dapF</name>
    <name type="ordered locus">OCAR_4263</name>
    <name type="ordered locus">OCA5_c02550</name>
</gene>
<keyword id="KW-0028">Amino-acid biosynthesis</keyword>
<keyword id="KW-0963">Cytoplasm</keyword>
<keyword id="KW-0413">Isomerase</keyword>
<keyword id="KW-0457">Lysine biosynthesis</keyword>
<keyword id="KW-1185">Reference proteome</keyword>
<protein>
    <recommendedName>
        <fullName evidence="1">Diaminopimelate epimerase</fullName>
        <shortName evidence="1">DAP epimerase</shortName>
        <ecNumber evidence="1">5.1.1.7</ecNumber>
    </recommendedName>
    <alternativeName>
        <fullName evidence="1">PLP-independent amino acid racemase</fullName>
    </alternativeName>
</protein>
<dbReference type="EC" id="5.1.1.7" evidence="1"/>
<dbReference type="EMBL" id="CP001196">
    <property type="protein sequence ID" value="ACI91412.1"/>
    <property type="molecule type" value="Genomic_DNA"/>
</dbReference>
<dbReference type="EMBL" id="CP002826">
    <property type="protein sequence ID" value="AEI04984.1"/>
    <property type="molecule type" value="Genomic_DNA"/>
</dbReference>
<dbReference type="RefSeq" id="WP_012561443.1">
    <property type="nucleotide sequence ID" value="NC_015684.1"/>
</dbReference>
<dbReference type="SMR" id="B6JAP3"/>
<dbReference type="STRING" id="504832.OCA5_c02550"/>
<dbReference type="KEGG" id="oca:OCAR_4263"/>
<dbReference type="KEGG" id="ocg:OCA5_c02550"/>
<dbReference type="PATRIC" id="fig|504832.7.peg.271"/>
<dbReference type="eggNOG" id="COG0253">
    <property type="taxonomic scope" value="Bacteria"/>
</dbReference>
<dbReference type="HOGENOM" id="CLU_053306_1_0_5"/>
<dbReference type="OrthoDB" id="9805408at2"/>
<dbReference type="UniPathway" id="UPA00034">
    <property type="reaction ID" value="UER00025"/>
</dbReference>
<dbReference type="Proteomes" id="UP000007730">
    <property type="component" value="Chromosome"/>
</dbReference>
<dbReference type="GO" id="GO:0005829">
    <property type="term" value="C:cytosol"/>
    <property type="evidence" value="ECO:0007669"/>
    <property type="project" value="TreeGrafter"/>
</dbReference>
<dbReference type="GO" id="GO:0008837">
    <property type="term" value="F:diaminopimelate epimerase activity"/>
    <property type="evidence" value="ECO:0007669"/>
    <property type="project" value="UniProtKB-UniRule"/>
</dbReference>
<dbReference type="GO" id="GO:0009089">
    <property type="term" value="P:lysine biosynthetic process via diaminopimelate"/>
    <property type="evidence" value="ECO:0007669"/>
    <property type="project" value="UniProtKB-UniRule"/>
</dbReference>
<dbReference type="FunFam" id="3.10.310.10:FF:000004">
    <property type="entry name" value="Diaminopimelate epimerase"/>
    <property type="match status" value="1"/>
</dbReference>
<dbReference type="Gene3D" id="3.10.310.10">
    <property type="entry name" value="Diaminopimelate Epimerase, Chain A, domain 1"/>
    <property type="match status" value="2"/>
</dbReference>
<dbReference type="HAMAP" id="MF_00197">
    <property type="entry name" value="DAP_epimerase"/>
    <property type="match status" value="1"/>
</dbReference>
<dbReference type="InterPro" id="IPR018510">
    <property type="entry name" value="DAP_epimerase_AS"/>
</dbReference>
<dbReference type="InterPro" id="IPR001653">
    <property type="entry name" value="DAP_epimerase_DapF"/>
</dbReference>
<dbReference type="NCBIfam" id="TIGR00652">
    <property type="entry name" value="DapF"/>
    <property type="match status" value="1"/>
</dbReference>
<dbReference type="PANTHER" id="PTHR31689:SF0">
    <property type="entry name" value="DIAMINOPIMELATE EPIMERASE"/>
    <property type="match status" value="1"/>
</dbReference>
<dbReference type="PANTHER" id="PTHR31689">
    <property type="entry name" value="DIAMINOPIMELATE EPIMERASE, CHLOROPLASTIC"/>
    <property type="match status" value="1"/>
</dbReference>
<dbReference type="Pfam" id="PF01678">
    <property type="entry name" value="DAP_epimerase"/>
    <property type="match status" value="2"/>
</dbReference>
<dbReference type="SUPFAM" id="SSF54506">
    <property type="entry name" value="Diaminopimelate epimerase-like"/>
    <property type="match status" value="2"/>
</dbReference>
<dbReference type="PROSITE" id="PS01326">
    <property type="entry name" value="DAP_EPIMERASE"/>
    <property type="match status" value="1"/>
</dbReference>
<accession>B6JAP3</accession>
<accession>F8BTD9</accession>
<proteinExistence type="inferred from homology"/>
<name>DAPF_AFIC5</name>
<comment type="function">
    <text evidence="1">Catalyzes the stereoinversion of LL-2,6-diaminopimelate (L,L-DAP) to meso-diaminopimelate (meso-DAP), a precursor of L-lysine and an essential component of the bacterial peptidoglycan.</text>
</comment>
<comment type="catalytic activity">
    <reaction evidence="1">
        <text>(2S,6S)-2,6-diaminopimelate = meso-2,6-diaminopimelate</text>
        <dbReference type="Rhea" id="RHEA:15393"/>
        <dbReference type="ChEBI" id="CHEBI:57609"/>
        <dbReference type="ChEBI" id="CHEBI:57791"/>
        <dbReference type="EC" id="5.1.1.7"/>
    </reaction>
</comment>
<comment type="pathway">
    <text evidence="1">Amino-acid biosynthesis; L-lysine biosynthesis via DAP pathway; DL-2,6-diaminopimelate from LL-2,6-diaminopimelate: step 1/1.</text>
</comment>
<comment type="subunit">
    <text evidence="1">Homodimer.</text>
</comment>
<comment type="subcellular location">
    <subcellularLocation>
        <location evidence="1">Cytoplasm</location>
    </subcellularLocation>
</comment>
<comment type="similarity">
    <text evidence="1">Belongs to the diaminopimelate epimerase family.</text>
</comment>
<organism>
    <name type="scientific">Afipia carboxidovorans (strain ATCC 49405 / DSM 1227 / KCTC 32145 / OM5)</name>
    <name type="common">Oligotropha carboxidovorans</name>
    <dbReference type="NCBI Taxonomy" id="504832"/>
    <lineage>
        <taxon>Bacteria</taxon>
        <taxon>Pseudomonadati</taxon>
        <taxon>Pseudomonadota</taxon>
        <taxon>Alphaproteobacteria</taxon>
        <taxon>Hyphomicrobiales</taxon>
        <taxon>Nitrobacteraceae</taxon>
        <taxon>Afipia</taxon>
    </lineage>
</organism>
<reference key="1">
    <citation type="journal article" date="2008" name="J. Bacteriol.">
        <title>Genome sequence of the chemolithoautotrophic bacterium Oligotropha carboxidovorans OM5T.</title>
        <authorList>
            <person name="Paul D."/>
            <person name="Bridges S."/>
            <person name="Burgess S.C."/>
            <person name="Dandass Y."/>
            <person name="Lawrence M.L."/>
        </authorList>
    </citation>
    <scope>NUCLEOTIDE SEQUENCE [LARGE SCALE GENOMIC DNA]</scope>
    <source>
        <strain>ATCC 49405 / DSM 1227 / KCTC 32145 / OM5</strain>
    </source>
</reference>
<reference key="2">
    <citation type="journal article" date="2011" name="J. Bacteriol.">
        <title>Complete genome sequences of the chemolithoautotrophic Oligotropha carboxidovorans strains OM4 and OM5.</title>
        <authorList>
            <person name="Volland S."/>
            <person name="Rachinger M."/>
            <person name="Strittmatter A."/>
            <person name="Daniel R."/>
            <person name="Gottschalk G."/>
            <person name="Meyer O."/>
        </authorList>
    </citation>
    <scope>NUCLEOTIDE SEQUENCE [LARGE SCALE GENOMIC DNA]</scope>
    <source>
        <strain>ATCC 49405 / DSM 1227 / KCTC 32145 / OM5</strain>
    </source>
</reference>
<evidence type="ECO:0000255" key="1">
    <source>
        <dbReference type="HAMAP-Rule" id="MF_00197"/>
    </source>
</evidence>